<reference key="1">
    <citation type="journal article" date="2005" name="Proc. Natl. Acad. Sci. U.S.A.">
        <title>Comparison of the complete genome sequences of Pseudomonas syringae pv. syringae B728a and pv. tomato DC3000.</title>
        <authorList>
            <person name="Feil H."/>
            <person name="Feil W.S."/>
            <person name="Chain P."/>
            <person name="Larimer F."/>
            <person name="Dibartolo G."/>
            <person name="Copeland A."/>
            <person name="Lykidis A."/>
            <person name="Trong S."/>
            <person name="Nolan M."/>
            <person name="Goltsman E."/>
            <person name="Thiel J."/>
            <person name="Malfatti S."/>
            <person name="Loper J.E."/>
            <person name="Lapidus A."/>
            <person name="Detter J.C."/>
            <person name="Land M."/>
            <person name="Richardson P.M."/>
            <person name="Kyrpides N.C."/>
            <person name="Ivanova N."/>
            <person name="Lindow S.E."/>
        </authorList>
    </citation>
    <scope>NUCLEOTIDE SEQUENCE [LARGE SCALE GENOMIC DNA]</scope>
    <source>
        <strain>B728a</strain>
    </source>
</reference>
<organism>
    <name type="scientific">Pseudomonas syringae pv. syringae (strain B728a)</name>
    <dbReference type="NCBI Taxonomy" id="205918"/>
    <lineage>
        <taxon>Bacteria</taxon>
        <taxon>Pseudomonadati</taxon>
        <taxon>Pseudomonadota</taxon>
        <taxon>Gammaproteobacteria</taxon>
        <taxon>Pseudomonadales</taxon>
        <taxon>Pseudomonadaceae</taxon>
        <taxon>Pseudomonas</taxon>
        <taxon>Pseudomonas syringae</taxon>
    </lineage>
</organism>
<feature type="chain" id="PRO_0000230629" description="Large ribosomal subunit protein uL1">
    <location>
        <begin position="1"/>
        <end position="231"/>
    </location>
</feature>
<protein>
    <recommendedName>
        <fullName evidence="1">Large ribosomal subunit protein uL1</fullName>
    </recommendedName>
    <alternativeName>
        <fullName evidence="2">50S ribosomal protein L1</fullName>
    </alternativeName>
</protein>
<sequence>MAKLTKRQKAIAEKIEAGKSYNFVDAAALLTELSTVKFSESIDVAVNLGVDPRKSDQVVRSATVLPHGTGKTVRVAVFTQGPAAEAALAAGADRVGMDDLAAEMKAGDLNYDVVIASPDAMRVVGQLGQVLGPRGLMPNPKVGTVTPDVANAVKNAKAGQVRYRTDKNGIIHTSVGKVGFDAVKLKENVEALIADLKRIKPASSKGIYVKRITLSTTMGPGLVIDQGSLEA</sequence>
<evidence type="ECO:0000255" key="1">
    <source>
        <dbReference type="HAMAP-Rule" id="MF_01318"/>
    </source>
</evidence>
<evidence type="ECO:0000305" key="2"/>
<comment type="function">
    <text evidence="1">Binds directly to 23S rRNA. The L1 stalk is quite mobile in the ribosome, and is involved in E site tRNA release.</text>
</comment>
<comment type="function">
    <text evidence="1">Protein L1 is also a translational repressor protein, it controls the translation of the L11 operon by binding to its mRNA.</text>
</comment>
<comment type="subunit">
    <text evidence="1">Part of the 50S ribosomal subunit.</text>
</comment>
<comment type="similarity">
    <text evidence="1">Belongs to the universal ribosomal protein uL1 family.</text>
</comment>
<dbReference type="EMBL" id="CP000075">
    <property type="protein sequence ID" value="AAY39588.1"/>
    <property type="molecule type" value="Genomic_DNA"/>
</dbReference>
<dbReference type="RefSeq" id="WP_003400443.1">
    <property type="nucleotide sequence ID" value="NC_007005.1"/>
</dbReference>
<dbReference type="RefSeq" id="YP_237626.1">
    <property type="nucleotide sequence ID" value="NC_007005.1"/>
</dbReference>
<dbReference type="SMR" id="Q4ZMN4"/>
<dbReference type="STRING" id="205918.Psyr_4558"/>
<dbReference type="GeneID" id="73733809"/>
<dbReference type="KEGG" id="psb:Psyr_4558"/>
<dbReference type="PATRIC" id="fig|205918.7.peg.4697"/>
<dbReference type="eggNOG" id="COG0081">
    <property type="taxonomic scope" value="Bacteria"/>
</dbReference>
<dbReference type="HOGENOM" id="CLU_062853_0_0_6"/>
<dbReference type="OrthoDB" id="9803740at2"/>
<dbReference type="Proteomes" id="UP000000426">
    <property type="component" value="Chromosome"/>
</dbReference>
<dbReference type="GO" id="GO:0022625">
    <property type="term" value="C:cytosolic large ribosomal subunit"/>
    <property type="evidence" value="ECO:0007669"/>
    <property type="project" value="TreeGrafter"/>
</dbReference>
<dbReference type="GO" id="GO:0019843">
    <property type="term" value="F:rRNA binding"/>
    <property type="evidence" value="ECO:0007669"/>
    <property type="project" value="UniProtKB-UniRule"/>
</dbReference>
<dbReference type="GO" id="GO:0003735">
    <property type="term" value="F:structural constituent of ribosome"/>
    <property type="evidence" value="ECO:0007669"/>
    <property type="project" value="InterPro"/>
</dbReference>
<dbReference type="GO" id="GO:0000049">
    <property type="term" value="F:tRNA binding"/>
    <property type="evidence" value="ECO:0007669"/>
    <property type="project" value="UniProtKB-KW"/>
</dbReference>
<dbReference type="GO" id="GO:0006417">
    <property type="term" value="P:regulation of translation"/>
    <property type="evidence" value="ECO:0007669"/>
    <property type="project" value="UniProtKB-KW"/>
</dbReference>
<dbReference type="GO" id="GO:0006412">
    <property type="term" value="P:translation"/>
    <property type="evidence" value="ECO:0007669"/>
    <property type="project" value="UniProtKB-UniRule"/>
</dbReference>
<dbReference type="CDD" id="cd00403">
    <property type="entry name" value="Ribosomal_L1"/>
    <property type="match status" value="1"/>
</dbReference>
<dbReference type="FunFam" id="3.40.50.790:FF:000001">
    <property type="entry name" value="50S ribosomal protein L1"/>
    <property type="match status" value="1"/>
</dbReference>
<dbReference type="Gene3D" id="3.30.190.20">
    <property type="match status" value="1"/>
</dbReference>
<dbReference type="Gene3D" id="3.40.50.790">
    <property type="match status" value="1"/>
</dbReference>
<dbReference type="HAMAP" id="MF_01318_B">
    <property type="entry name" value="Ribosomal_uL1_B"/>
    <property type="match status" value="1"/>
</dbReference>
<dbReference type="InterPro" id="IPR005878">
    <property type="entry name" value="Ribosom_uL1_bac-type"/>
</dbReference>
<dbReference type="InterPro" id="IPR002143">
    <property type="entry name" value="Ribosomal_uL1"/>
</dbReference>
<dbReference type="InterPro" id="IPR023674">
    <property type="entry name" value="Ribosomal_uL1-like"/>
</dbReference>
<dbReference type="InterPro" id="IPR028364">
    <property type="entry name" value="Ribosomal_uL1/biogenesis"/>
</dbReference>
<dbReference type="InterPro" id="IPR016095">
    <property type="entry name" value="Ribosomal_uL1_3-a/b-sand"/>
</dbReference>
<dbReference type="InterPro" id="IPR023673">
    <property type="entry name" value="Ribosomal_uL1_CS"/>
</dbReference>
<dbReference type="NCBIfam" id="TIGR01169">
    <property type="entry name" value="rplA_bact"/>
    <property type="match status" value="1"/>
</dbReference>
<dbReference type="PANTHER" id="PTHR36427">
    <property type="entry name" value="54S RIBOSOMAL PROTEIN L1, MITOCHONDRIAL"/>
    <property type="match status" value="1"/>
</dbReference>
<dbReference type="PANTHER" id="PTHR36427:SF3">
    <property type="entry name" value="LARGE RIBOSOMAL SUBUNIT PROTEIN UL1M"/>
    <property type="match status" value="1"/>
</dbReference>
<dbReference type="Pfam" id="PF00687">
    <property type="entry name" value="Ribosomal_L1"/>
    <property type="match status" value="1"/>
</dbReference>
<dbReference type="PIRSF" id="PIRSF002155">
    <property type="entry name" value="Ribosomal_L1"/>
    <property type="match status" value="1"/>
</dbReference>
<dbReference type="SUPFAM" id="SSF56808">
    <property type="entry name" value="Ribosomal protein L1"/>
    <property type="match status" value="1"/>
</dbReference>
<dbReference type="PROSITE" id="PS01199">
    <property type="entry name" value="RIBOSOMAL_L1"/>
    <property type="match status" value="1"/>
</dbReference>
<proteinExistence type="inferred from homology"/>
<accession>Q4ZMN4</accession>
<name>RL1_PSEU2</name>
<gene>
    <name evidence="1" type="primary">rplA</name>
    <name type="ordered locus">Psyr_4558</name>
</gene>
<keyword id="KW-0678">Repressor</keyword>
<keyword id="KW-0687">Ribonucleoprotein</keyword>
<keyword id="KW-0689">Ribosomal protein</keyword>
<keyword id="KW-0694">RNA-binding</keyword>
<keyword id="KW-0699">rRNA-binding</keyword>
<keyword id="KW-0810">Translation regulation</keyword>
<keyword id="KW-0820">tRNA-binding</keyword>